<gene>
    <name type="primary">EO</name>
    <name type="synonym">QR</name>
</gene>
<comment type="function">
    <text evidence="1">Enone oxidoreductase involved in the biosynthesis of 4-hydroxy-2,5-dimethyl-3(2H)-furanone (HDMF or furaneol), the key flavor compound in strawberries. Can use both NADH and NADPH as the electron donor.</text>
</comment>
<comment type="catalytic activity">
    <reaction evidence="1 2">
        <text>4-hydroxy-2,5-dimethyl-furan-3(2H)-one + NADP(+) = 4-hydroxy-5-methyl-2-methylenefuran-3(2H)-one + NADPH + H(+)</text>
        <dbReference type="Rhea" id="RHEA:39111"/>
        <dbReference type="ChEBI" id="CHEBI:15378"/>
        <dbReference type="ChEBI" id="CHEBI:57783"/>
        <dbReference type="ChEBI" id="CHEBI:58349"/>
        <dbReference type="ChEBI" id="CHEBI:76245"/>
        <dbReference type="ChEBI" id="CHEBI:76247"/>
        <dbReference type="EC" id="1.3.1.105"/>
    </reaction>
</comment>
<comment type="biophysicochemical properties">
    <kinetics>
        <KM evidence="1 2">2.1 mM for (2E)-2-ethylidene-4-hydroxy-5-methyl-3(2H)-furanone (EDHMF)</KM>
        <KM evidence="1 2">361 uM for NADH</KM>
        <KM evidence="1 2">325 uM for NADPH</KM>
        <KM evidence="1 2">35 uM for 9,10-phenanthrene quinone</KM>
        <Vmax evidence="1 2">56.0 nmol/sec/mg enzyme</Vmax>
    </kinetics>
    <phDependence>
        <text evidence="1 2">Optimum pH is 7.0.</text>
    </phDependence>
    <temperatureDependence>
        <text evidence="1 2">Optimum temperature is 37 degrees Celsius.</text>
    </temperatureDependence>
</comment>
<comment type="subunit">
    <text evidence="1 2">Monomer.</text>
</comment>
<comment type="tissue specificity">
    <text evidence="1">Expressed in parenchyma tissues of red fruits. Not found in vascular tissues. Also detected in the achenes.</text>
</comment>
<comment type="developmental stage">
    <text evidence="1">Up-regulated during ripening.</text>
</comment>
<comment type="induction">
    <text evidence="1">Down-regulated by auxin.</text>
</comment>
<comment type="PTM">
    <text>The N-terminus is blocked.</text>
</comment>
<comment type="similarity">
    <text evidence="3">Belongs to the zinc-containing alcohol dehydrogenase family. Quinone oxidoreductase subfamily.</text>
</comment>
<organism>
    <name type="scientific">Fragaria ananassa</name>
    <name type="common">Strawberry</name>
    <name type="synonym">Fragaria chiloensis x Fragaria virginiana</name>
    <dbReference type="NCBI Taxonomy" id="3747"/>
    <lineage>
        <taxon>Eukaryota</taxon>
        <taxon>Viridiplantae</taxon>
        <taxon>Streptophyta</taxon>
        <taxon>Embryophyta</taxon>
        <taxon>Tracheophyta</taxon>
        <taxon>Spermatophyta</taxon>
        <taxon>Magnoliopsida</taxon>
        <taxon>eudicotyledons</taxon>
        <taxon>Gunneridae</taxon>
        <taxon>Pentapetalae</taxon>
        <taxon>rosids</taxon>
        <taxon>fabids</taxon>
        <taxon>Rosales</taxon>
        <taxon>Rosaceae</taxon>
        <taxon>Rosoideae</taxon>
        <taxon>Potentilleae</taxon>
        <taxon>Fragariinae</taxon>
        <taxon>Fragaria</taxon>
    </lineage>
</organism>
<protein>
    <recommendedName>
        <fullName>2-methylene-furan-3-one reductase</fullName>
        <ecNumber evidence="1 2">1.3.1.105</ecNumber>
    </recommendedName>
    <alternativeName>
        <fullName>Enone oxidoreductase</fullName>
        <shortName>FaEO</shortName>
    </alternativeName>
    <alternativeName>
        <fullName>Quinone oxidoreductase</fullName>
        <shortName>FaQR</shortName>
    </alternativeName>
</protein>
<feature type="chain" id="PRO_0000428657" description="2-methylene-furan-3-one reductase">
    <location>
        <begin position="1"/>
        <end position="323"/>
    </location>
</feature>
<feature type="binding site">
    <location>
        <position position="59"/>
    </location>
    <ligand>
        <name>NADP(+)</name>
        <dbReference type="ChEBI" id="CHEBI:58349"/>
    </ligand>
</feature>
<feature type="binding site" evidence="2">
    <location>
        <position position="59"/>
    </location>
    <ligand>
        <name>substrate</name>
    </ligand>
</feature>
<feature type="binding site">
    <location>
        <begin position="174"/>
        <end position="175"/>
    </location>
    <ligand>
        <name>NADP(+)</name>
        <dbReference type="ChEBI" id="CHEBI:58349"/>
    </ligand>
</feature>
<feature type="binding site">
    <location>
        <begin position="197"/>
        <end position="200"/>
    </location>
    <ligand>
        <name>NADP(+)</name>
        <dbReference type="ChEBI" id="CHEBI:58349"/>
    </ligand>
</feature>
<feature type="binding site">
    <location>
        <position position="216"/>
    </location>
    <ligand>
        <name>NADP(+)</name>
        <dbReference type="ChEBI" id="CHEBI:58349"/>
    </ligand>
</feature>
<feature type="binding site">
    <location>
        <position position="254"/>
    </location>
    <ligand>
        <name>NADP(+)</name>
        <dbReference type="ChEBI" id="CHEBI:58349"/>
    </ligand>
</feature>
<feature type="binding site">
    <location>
        <begin position="265"/>
        <end position="267"/>
    </location>
    <ligand>
        <name>NADP(+)</name>
        <dbReference type="ChEBI" id="CHEBI:58349"/>
    </ligand>
</feature>
<feature type="binding site">
    <location>
        <begin position="312"/>
        <end position="313"/>
    </location>
    <ligand>
        <name>NADP(+)</name>
        <dbReference type="ChEBI" id="CHEBI:58349"/>
    </ligand>
</feature>
<dbReference type="EC" id="1.3.1.105" evidence="1 2"/>
<dbReference type="EMBL" id="AY048861">
    <property type="protein sequence ID" value="AAL06644.1"/>
    <property type="molecule type" value="mRNA"/>
</dbReference>
<dbReference type="PDB" id="4IDA">
    <property type="method" value="X-ray"/>
    <property type="resolution" value="1.60 A"/>
    <property type="chains" value="A=2-322"/>
</dbReference>
<dbReference type="PDB" id="4IDB">
    <property type="method" value="X-ray"/>
    <property type="resolution" value="1.55 A"/>
    <property type="chains" value="A=2-322"/>
</dbReference>
<dbReference type="PDB" id="4IDC">
    <property type="method" value="X-ray"/>
    <property type="resolution" value="1.40 A"/>
    <property type="chains" value="A=2-322"/>
</dbReference>
<dbReference type="PDB" id="4IDD">
    <property type="method" value="X-ray"/>
    <property type="resolution" value="1.50 A"/>
    <property type="chains" value="A=2-322"/>
</dbReference>
<dbReference type="PDB" id="4IDE">
    <property type="method" value="X-ray"/>
    <property type="resolution" value="1.60 A"/>
    <property type="chains" value="A=2-322"/>
</dbReference>
<dbReference type="PDB" id="4IDF">
    <property type="method" value="X-ray"/>
    <property type="resolution" value="1.55 A"/>
    <property type="chains" value="A=2-321"/>
</dbReference>
<dbReference type="PDBsum" id="4IDA"/>
<dbReference type="PDBsum" id="4IDB"/>
<dbReference type="PDBsum" id="4IDC"/>
<dbReference type="PDBsum" id="4IDD"/>
<dbReference type="PDBsum" id="4IDE"/>
<dbReference type="PDBsum" id="4IDF"/>
<dbReference type="SMR" id="Q941I0"/>
<dbReference type="BRENDA" id="1.3.1.105">
    <property type="organism ID" value="2320"/>
</dbReference>
<dbReference type="GO" id="GO:0102978">
    <property type="term" value="F:furaneol oxidoreductase activity"/>
    <property type="evidence" value="ECO:0007669"/>
    <property type="project" value="UniProtKB-EC"/>
</dbReference>
<dbReference type="GO" id="GO:0008270">
    <property type="term" value="F:zinc ion binding"/>
    <property type="evidence" value="ECO:0007669"/>
    <property type="project" value="InterPro"/>
</dbReference>
<dbReference type="CDD" id="cd05289">
    <property type="entry name" value="MDR_like_2"/>
    <property type="match status" value="1"/>
</dbReference>
<dbReference type="Gene3D" id="3.90.180.10">
    <property type="entry name" value="Medium-chain alcohol dehydrogenases, catalytic domain"/>
    <property type="match status" value="1"/>
</dbReference>
<dbReference type="Gene3D" id="3.40.50.720">
    <property type="entry name" value="NAD(P)-binding Rossmann-like Domain"/>
    <property type="match status" value="1"/>
</dbReference>
<dbReference type="InterPro" id="IPR013154">
    <property type="entry name" value="ADH-like_N"/>
</dbReference>
<dbReference type="InterPro" id="IPR044626">
    <property type="entry name" value="AOR-like"/>
</dbReference>
<dbReference type="InterPro" id="IPR011032">
    <property type="entry name" value="GroES-like_sf"/>
</dbReference>
<dbReference type="InterPro" id="IPR036291">
    <property type="entry name" value="NAD(P)-bd_dom_sf"/>
</dbReference>
<dbReference type="InterPro" id="IPR020843">
    <property type="entry name" value="PKS_ER"/>
</dbReference>
<dbReference type="InterPro" id="IPR002364">
    <property type="entry name" value="Quin_OxRdtase/zeta-crystal_CS"/>
</dbReference>
<dbReference type="PANTHER" id="PTHR44573:SF3">
    <property type="entry name" value="CYTOSOLIC ALKENAL_ONE OXIDOREDUCTASE"/>
    <property type="match status" value="1"/>
</dbReference>
<dbReference type="PANTHER" id="PTHR44573">
    <property type="entry name" value="NADPH-DEPENDENT ALKENAL/ONE OXIDOREDUCTASE, CHLOROPLASTIC"/>
    <property type="match status" value="1"/>
</dbReference>
<dbReference type="Pfam" id="PF08240">
    <property type="entry name" value="ADH_N"/>
    <property type="match status" value="1"/>
</dbReference>
<dbReference type="Pfam" id="PF13602">
    <property type="entry name" value="ADH_zinc_N_2"/>
    <property type="match status" value="1"/>
</dbReference>
<dbReference type="SMART" id="SM00829">
    <property type="entry name" value="PKS_ER"/>
    <property type="match status" value="1"/>
</dbReference>
<dbReference type="SUPFAM" id="SSF50129">
    <property type="entry name" value="GroES-like"/>
    <property type="match status" value="1"/>
</dbReference>
<dbReference type="SUPFAM" id="SSF51735">
    <property type="entry name" value="NAD(P)-binding Rossmann-fold domains"/>
    <property type="match status" value="1"/>
</dbReference>
<dbReference type="PROSITE" id="PS01162">
    <property type="entry name" value="QOR_ZETA_CRYSTAL"/>
    <property type="match status" value="1"/>
</dbReference>
<keyword id="KW-0002">3D-structure</keyword>
<keyword id="KW-0903">Direct protein sequencing</keyword>
<keyword id="KW-0520">NAD</keyword>
<keyword id="KW-0521">NADP</keyword>
<keyword id="KW-0560">Oxidoreductase</keyword>
<evidence type="ECO:0000269" key="1">
    <source>
    </source>
</evidence>
<evidence type="ECO:0000269" key="2">
    <source>
    </source>
</evidence>
<evidence type="ECO:0000305" key="3"/>
<reference key="1">
    <citation type="journal article" date="2006" name="Plant Cell">
        <title>FaQR, required for the biosynthesis of the strawberry flavor compound 4-hydroxy-2,5-dimethyl-3(2H)-furanone, encodes an enone oxidoreductase.</title>
        <authorList>
            <person name="Raab T."/>
            <person name="Lopez-Raez J.A."/>
            <person name="Klein D."/>
            <person name="Caballero J.L."/>
            <person name="Moyano E."/>
            <person name="Schwab W."/>
            <person name="Munoz-Blanco J."/>
        </authorList>
    </citation>
    <scope>NUCLEOTIDE SEQUENCE [MRNA]</scope>
    <scope>PROTEIN SEQUENCE OF 4-8 AND 292-301</scope>
    <scope>FUNCTION</scope>
    <scope>CATALYTIC ACTIVITY</scope>
    <scope>SUBSTRATE SPECIFICITY</scope>
    <scope>BIOPHYSICOCHEMICAL PROPERTIES</scope>
    <scope>DEVELOPMENTAL STAGE</scope>
    <scope>INDUCTION BY AUXIN</scope>
    <scope>TISSUE SPECIFICITY</scope>
    <scope>SUBUNIT</scope>
    <source>
        <strain>cv. Chandler</strain>
    </source>
</reference>
<reference key="2">
    <citation type="journal article" date="2013" name="J. Biol. Chem.">
        <title>Structural basis for the enzymatic formation of the key strawberry flavor compound 4-hydroxy-2,5-dimethyl-3(2H)-furanone.</title>
        <authorList>
            <person name="Schiefner A."/>
            <person name="Sinz Q."/>
            <person name="Neumaier I."/>
            <person name="Schwab W."/>
            <person name="Skerra A."/>
        </authorList>
    </citation>
    <scope>X-RAY CRYSTALLOGRAPHY (1.40 ANGSTROMS) OF 2-322 IN COMPLEX WITH SUBSTRATE</scope>
    <scope>CATALYTIC ACTIVITY</scope>
    <scope>BIOPHYSICOCHEMICAL PROPERTIES</scope>
    <scope>SUBUNIT</scope>
</reference>
<proteinExistence type="evidence at protein level"/>
<name>ENOXC_FRAAN</name>
<accession>Q941I0</accession>
<sequence length="323" mass="34296">MAAAPSESIPSVNKAWVYSEYGKTSDVLKFDPSVAVPEIKEDQVLIKVVAASLNPVDFKRALGYFKDTDSPLPTIPGYDVAGVVVKVGSQVTKFKVGDEVYGDLNETALVNPTRFGSLAEYTAAYERVLAHKPKNLSFIEAASLPLAIETAHEGLERAELSAGKSVLVLGGAGGVGTHIIQLAKHVFGASKVAATASTKKLDLLRTLGAADLAIDYTKENFEDLPEKFDVVYDAVGETDKAVKAVKEGGKVVTIVGPATPPAILFVLTSKGSVLEKLKPYLESGKVKPVLDPTSPYPFTKVVEAFGYLESSRATGKVVVYPIP</sequence>